<organism>
    <name type="scientific">Staphylococcus epidermidis</name>
    <dbReference type="NCBI Taxonomy" id="1282"/>
    <lineage>
        <taxon>Bacteria</taxon>
        <taxon>Bacillati</taxon>
        <taxon>Bacillota</taxon>
        <taxon>Bacilli</taxon>
        <taxon>Bacillales</taxon>
        <taxon>Staphylococcaceae</taxon>
        <taxon>Staphylococcus</taxon>
    </lineage>
</organism>
<sequence length="244" mass="28941">MNEKNIKHSQNFITSKHNIDKIMTNIRLNEHDNIFEIGSGKGHFTLELVQRCNFVTAIEIDHKLCKTTENKLVDHDNFQVLNKDILQFKFPKNQSYKIFGNIPYNISTDIIRKIVFDSIADEIYLIVEYGFAKRLLNTKRSFALFLMAEVDISILSMVPREYFHPKPKVNSSLIRLNRKKSRISHKDKQKYNYFVMKWVNKEYKKIFTKNQFNNSLKHAGIDDLNNISFEQFLSLFNSYKLFNK</sequence>
<feature type="chain" id="PRO_0000101685" description="rRNA adenine N-6-methyltransferase">
    <location>
        <begin position="1"/>
        <end position="244"/>
    </location>
</feature>
<feature type="binding site" evidence="1">
    <location>
        <position position="11"/>
    </location>
    <ligand>
        <name>S-adenosyl-L-methionine</name>
        <dbReference type="ChEBI" id="CHEBI:59789"/>
    </ligand>
</feature>
<feature type="binding site" evidence="1">
    <location>
        <position position="13"/>
    </location>
    <ligand>
        <name>S-adenosyl-L-methionine</name>
        <dbReference type="ChEBI" id="CHEBI:59789"/>
    </ligand>
</feature>
<feature type="binding site" evidence="1">
    <location>
        <position position="38"/>
    </location>
    <ligand>
        <name>S-adenosyl-L-methionine</name>
        <dbReference type="ChEBI" id="CHEBI:59789"/>
    </ligand>
</feature>
<feature type="binding site" evidence="1">
    <location>
        <position position="59"/>
    </location>
    <ligand>
        <name>S-adenosyl-L-methionine</name>
        <dbReference type="ChEBI" id="CHEBI:59789"/>
    </ligand>
</feature>
<feature type="binding site" evidence="1">
    <location>
        <position position="84"/>
    </location>
    <ligand>
        <name>S-adenosyl-L-methionine</name>
        <dbReference type="ChEBI" id="CHEBI:59789"/>
    </ligand>
</feature>
<feature type="binding site" evidence="1">
    <location>
        <position position="101"/>
    </location>
    <ligand>
        <name>S-adenosyl-L-methionine</name>
        <dbReference type="ChEBI" id="CHEBI:59789"/>
    </ligand>
</feature>
<keyword id="KW-0046">Antibiotic resistance</keyword>
<keyword id="KW-0489">Methyltransferase</keyword>
<keyword id="KW-0614">Plasmid</keyword>
<keyword id="KW-0694">RNA-binding</keyword>
<keyword id="KW-0949">S-adenosyl-L-methionine</keyword>
<keyword id="KW-0808">Transferase</keyword>
<comment type="function">
    <text>This protein produces a dimethylation of the adenine residue at position 2085 in 23S rRNA, resulting in reduced affinity between ribosomes and macrolide-lincosamide-streptogramin B antibiotics.</text>
</comment>
<comment type="catalytic activity">
    <reaction>
        <text>adenosine(2085) in 23S rRNA + 2 S-adenosyl-L-methionine = N(6)-dimethyladenosine(2085) in 23S rRNA + 2 S-adenosyl-L-homocysteine + 2 H(+)</text>
        <dbReference type="Rhea" id="RHEA:42784"/>
        <dbReference type="Rhea" id="RHEA-COMP:10237"/>
        <dbReference type="Rhea" id="RHEA-COMP:10238"/>
        <dbReference type="ChEBI" id="CHEBI:15378"/>
        <dbReference type="ChEBI" id="CHEBI:57856"/>
        <dbReference type="ChEBI" id="CHEBI:59789"/>
        <dbReference type="ChEBI" id="CHEBI:74411"/>
        <dbReference type="ChEBI" id="CHEBI:74493"/>
        <dbReference type="EC" id="2.1.1.184"/>
    </reaction>
</comment>
<comment type="similarity">
    <text evidence="1">Belongs to the class I-like SAM-binding methyltransferase superfamily. rRNA adenine N(6)-methyltransferase family.</text>
</comment>
<dbReference type="EC" id="2.1.1.184"/>
<dbReference type="EMBL" id="M12730">
    <property type="protein sequence ID" value="AAA98296.1"/>
    <property type="molecule type" value="Genomic_DNA"/>
</dbReference>
<dbReference type="PIR" id="A24497">
    <property type="entry name" value="A24497"/>
</dbReference>
<dbReference type="RefSeq" id="NP_040462.1">
    <property type="nucleotide sequence ID" value="NC_001390.1"/>
</dbReference>
<dbReference type="RefSeq" id="WP_010889933.1">
    <property type="nucleotide sequence ID" value="NC_001390.1"/>
</dbReference>
<dbReference type="SMR" id="P06572"/>
<dbReference type="CARD" id="ARO:3000250">
    <property type="molecule name" value="ErmC"/>
    <property type="mechanism identifier" value="ARO:0001001"/>
    <property type="mechanism name" value="antibiotic target alteration"/>
</dbReference>
<dbReference type="GO" id="GO:0005829">
    <property type="term" value="C:cytosol"/>
    <property type="evidence" value="ECO:0007669"/>
    <property type="project" value="TreeGrafter"/>
</dbReference>
<dbReference type="GO" id="GO:0052910">
    <property type="term" value="F:23S rRNA (adenine(2085)-N(6))-dimethyltransferase activity"/>
    <property type="evidence" value="ECO:0007669"/>
    <property type="project" value="UniProtKB-EC"/>
</dbReference>
<dbReference type="GO" id="GO:0003723">
    <property type="term" value="F:RNA binding"/>
    <property type="evidence" value="ECO:0007669"/>
    <property type="project" value="UniProtKB-KW"/>
</dbReference>
<dbReference type="GO" id="GO:0000179">
    <property type="term" value="F:rRNA (adenine-N6,N6-)-dimethyltransferase activity"/>
    <property type="evidence" value="ECO:0007669"/>
    <property type="project" value="InterPro"/>
</dbReference>
<dbReference type="GO" id="GO:0046677">
    <property type="term" value="P:response to antibiotic"/>
    <property type="evidence" value="ECO:0007669"/>
    <property type="project" value="UniProtKB-KW"/>
</dbReference>
<dbReference type="CDD" id="cd02440">
    <property type="entry name" value="AdoMet_MTases"/>
    <property type="match status" value="1"/>
</dbReference>
<dbReference type="Gene3D" id="1.10.8.100">
    <property type="entry name" value="Ribosomal RNA adenine dimethylase-like, domain 2"/>
    <property type="match status" value="1"/>
</dbReference>
<dbReference type="Gene3D" id="3.40.50.150">
    <property type="entry name" value="Vaccinia Virus protein VP39"/>
    <property type="match status" value="1"/>
</dbReference>
<dbReference type="InterPro" id="IPR001737">
    <property type="entry name" value="KsgA/Erm"/>
</dbReference>
<dbReference type="InterPro" id="IPR023165">
    <property type="entry name" value="rRNA_Ade_diMease-like_C"/>
</dbReference>
<dbReference type="InterPro" id="IPR020596">
    <property type="entry name" value="rRNA_Ade_Mease_Trfase_CS"/>
</dbReference>
<dbReference type="InterPro" id="IPR020598">
    <property type="entry name" value="rRNA_Ade_methylase_Trfase_N"/>
</dbReference>
<dbReference type="InterPro" id="IPR029063">
    <property type="entry name" value="SAM-dependent_MTases_sf"/>
</dbReference>
<dbReference type="NCBIfam" id="NF000499">
    <property type="entry name" value="Erm23S_rRNA_broad"/>
    <property type="match status" value="1"/>
</dbReference>
<dbReference type="NCBIfam" id="NF012219">
    <property type="entry name" value="erm_C_23S_MT"/>
    <property type="match status" value="1"/>
</dbReference>
<dbReference type="PANTHER" id="PTHR11727">
    <property type="entry name" value="DIMETHYLADENOSINE TRANSFERASE"/>
    <property type="match status" value="1"/>
</dbReference>
<dbReference type="PANTHER" id="PTHR11727:SF7">
    <property type="entry name" value="DIMETHYLADENOSINE TRANSFERASE-RELATED"/>
    <property type="match status" value="1"/>
</dbReference>
<dbReference type="Pfam" id="PF00398">
    <property type="entry name" value="RrnaAD"/>
    <property type="match status" value="1"/>
</dbReference>
<dbReference type="SMART" id="SM00650">
    <property type="entry name" value="rADc"/>
    <property type="match status" value="1"/>
</dbReference>
<dbReference type="SUPFAM" id="SSF53335">
    <property type="entry name" value="S-adenosyl-L-methionine-dependent methyltransferases"/>
    <property type="match status" value="1"/>
</dbReference>
<dbReference type="PROSITE" id="PS01131">
    <property type="entry name" value="RRNA_A_DIMETH"/>
    <property type="match status" value="1"/>
</dbReference>
<dbReference type="PROSITE" id="PS51689">
    <property type="entry name" value="SAM_RNA_A_N6_MT"/>
    <property type="match status" value="1"/>
</dbReference>
<reference key="1">
    <citation type="journal article" date="1986" name="J. Bacteriol.">
        <title>Nucleotide sequence of the constitutive macrolide-lincosamide-streptogramin B resistance plasmid pNE131 from Staphylococcus epidermidis and homologies with Staphylococcus aureus plasmids pE194 and pSN2.</title>
        <authorList>
            <person name="Lampson B.C."/>
            <person name="Parisi J.T."/>
        </authorList>
    </citation>
    <scope>NUCLEOTIDE SEQUENCE [GENOMIC DNA]</scope>
</reference>
<reference key="2">
    <citation type="journal article" date="1986" name="J. Bacteriol.">
        <title>Naturally occurring Staphylococcus epidermidis plasmid expressing constitutive macrolide-lincosamide-streptogramin B resistance contains a deleted attenuator.</title>
        <authorList>
            <person name="Lampson B.C."/>
            <person name="Parisi J.T."/>
        </authorList>
    </citation>
    <scope>NUCLEOTIDE SEQUENCE [GENOMIC DNA]</scope>
</reference>
<proteinExistence type="inferred from homology"/>
<accession>P06572</accession>
<name>ERMM_STAEP</name>
<evidence type="ECO:0000255" key="1">
    <source>
        <dbReference type="PROSITE-ProRule" id="PRU01026"/>
    </source>
</evidence>
<geneLocation type="plasmid">
    <name>pNE131</name>
</geneLocation>
<gene>
    <name type="primary">ermM</name>
</gene>
<protein>
    <recommendedName>
        <fullName>rRNA adenine N-6-methyltransferase</fullName>
        <ecNumber>2.1.1.184</ecNumber>
    </recommendedName>
    <alternativeName>
        <fullName>Erythromycin resistance protein</fullName>
    </alternativeName>
    <alternativeName>
        <fullName>Macrolide-lincosamide-streptogramin B resistance protein</fullName>
    </alternativeName>
</protein>